<keyword id="KW-0396">Initiation factor</keyword>
<keyword id="KW-0648">Protein biosynthesis</keyword>
<proteinExistence type="inferred from homology"/>
<evidence type="ECO:0000255" key="1">
    <source>
        <dbReference type="HAMAP-Rule" id="MF_00032"/>
    </source>
</evidence>
<comment type="function">
    <text evidence="1">Binds to the 50S ribosomal subunit and prevents its association with the 30S ribosomal subunit to form the 70S initiation complex.</text>
</comment>
<comment type="similarity">
    <text evidence="1">Belongs to the eIF-6 family.</text>
</comment>
<accession>A9A8N1</accession>
<dbReference type="EMBL" id="CP000867">
    <property type="protein sequence ID" value="ABX01704.1"/>
    <property type="molecule type" value="Genomic_DNA"/>
</dbReference>
<dbReference type="SMR" id="A9A8N1"/>
<dbReference type="STRING" id="444158.MmarC6_0889"/>
<dbReference type="KEGG" id="mmx:MmarC6_0889"/>
<dbReference type="eggNOG" id="arCOG04176">
    <property type="taxonomic scope" value="Archaea"/>
</dbReference>
<dbReference type="HOGENOM" id="CLU_071894_1_0_2"/>
<dbReference type="OrthoDB" id="33582at2157"/>
<dbReference type="PhylomeDB" id="A9A8N1"/>
<dbReference type="GO" id="GO:0043022">
    <property type="term" value="F:ribosome binding"/>
    <property type="evidence" value="ECO:0007669"/>
    <property type="project" value="InterPro"/>
</dbReference>
<dbReference type="GO" id="GO:0003743">
    <property type="term" value="F:translation initiation factor activity"/>
    <property type="evidence" value="ECO:0007669"/>
    <property type="project" value="UniProtKB-UniRule"/>
</dbReference>
<dbReference type="GO" id="GO:0042256">
    <property type="term" value="P:cytosolic ribosome assembly"/>
    <property type="evidence" value="ECO:0007669"/>
    <property type="project" value="InterPro"/>
</dbReference>
<dbReference type="Gene3D" id="3.75.10.10">
    <property type="entry name" value="L-arginine/glycine Amidinotransferase, Chain A"/>
    <property type="match status" value="1"/>
</dbReference>
<dbReference type="HAMAP" id="MF_00032">
    <property type="entry name" value="eIF_6"/>
    <property type="match status" value="1"/>
</dbReference>
<dbReference type="InterPro" id="IPR002769">
    <property type="entry name" value="eIF6"/>
</dbReference>
<dbReference type="NCBIfam" id="TIGR00323">
    <property type="entry name" value="eIF-6"/>
    <property type="match status" value="1"/>
</dbReference>
<dbReference type="NCBIfam" id="NF003127">
    <property type="entry name" value="PRK04046.1-3"/>
    <property type="match status" value="1"/>
</dbReference>
<dbReference type="PANTHER" id="PTHR10784">
    <property type="entry name" value="TRANSLATION INITIATION FACTOR 6"/>
    <property type="match status" value="1"/>
</dbReference>
<dbReference type="Pfam" id="PF01912">
    <property type="entry name" value="eIF-6"/>
    <property type="match status" value="1"/>
</dbReference>
<dbReference type="PIRSF" id="PIRSF006413">
    <property type="entry name" value="IF-6"/>
    <property type="match status" value="1"/>
</dbReference>
<dbReference type="SMART" id="SM00654">
    <property type="entry name" value="eIF6"/>
    <property type="match status" value="1"/>
</dbReference>
<dbReference type="SUPFAM" id="SSF55909">
    <property type="entry name" value="Pentein"/>
    <property type="match status" value="1"/>
</dbReference>
<reference key="1">
    <citation type="submission" date="2007-10" db="EMBL/GenBank/DDBJ databases">
        <title>Complete sequence of Methanococcus maripaludis C6.</title>
        <authorList>
            <consortium name="US DOE Joint Genome Institute"/>
            <person name="Copeland A."/>
            <person name="Lucas S."/>
            <person name="Lapidus A."/>
            <person name="Barry K."/>
            <person name="Glavina del Rio T."/>
            <person name="Dalin E."/>
            <person name="Tice H."/>
            <person name="Pitluck S."/>
            <person name="Clum A."/>
            <person name="Schmutz J."/>
            <person name="Larimer F."/>
            <person name="Land M."/>
            <person name="Hauser L."/>
            <person name="Kyrpides N."/>
            <person name="Mikhailova N."/>
            <person name="Sieprawska-Lupa M."/>
            <person name="Whitman W.B."/>
            <person name="Richardson P."/>
        </authorList>
    </citation>
    <scope>NUCLEOTIDE SEQUENCE [LARGE SCALE GENOMIC DNA]</scope>
    <source>
        <strain>C6 / ATCC BAA-1332</strain>
    </source>
</reference>
<organism>
    <name type="scientific">Methanococcus maripaludis (strain C6 / ATCC BAA-1332)</name>
    <dbReference type="NCBI Taxonomy" id="444158"/>
    <lineage>
        <taxon>Archaea</taxon>
        <taxon>Methanobacteriati</taxon>
        <taxon>Methanobacteriota</taxon>
        <taxon>Methanomada group</taxon>
        <taxon>Methanococci</taxon>
        <taxon>Methanococcales</taxon>
        <taxon>Methanococcaceae</taxon>
        <taxon>Methanococcus</taxon>
    </lineage>
</organism>
<sequence>MIMKTYFSGVSTLGVHSLATEDYGFFPLSVDQKTMERMKNVLDIPATQLNISNSSLIGSLCVGNSNGLLVPDITTEKEVELIKMFLKENSLDVNLERLKAKNTAFGNLILTNNKGCIISEELSRFRKTIEDVLDVESGVGNYAELATVGSNGVATDKGCLVHPLTDELELEWIQNILRVDYVERGTANRGVTSVGACILANSKGAVVGGDTSGPEILKIEEALDLID</sequence>
<feature type="chain" id="PRO_1000090394" description="Translation initiation factor 6">
    <location>
        <begin position="1"/>
        <end position="227"/>
    </location>
</feature>
<protein>
    <recommendedName>
        <fullName evidence="1">Translation initiation factor 6</fullName>
        <shortName evidence="1">aIF-6</shortName>
    </recommendedName>
</protein>
<name>IF6_METM6</name>
<gene>
    <name evidence="1" type="primary">eif6</name>
    <name type="ordered locus">MmarC6_0889</name>
</gene>